<reference key="1">
    <citation type="journal article" date="2002" name="Nature">
        <title>Genome sequence of the plant pathogen Ralstonia solanacearum.</title>
        <authorList>
            <person name="Salanoubat M."/>
            <person name="Genin S."/>
            <person name="Artiguenave F."/>
            <person name="Gouzy J."/>
            <person name="Mangenot S."/>
            <person name="Arlat M."/>
            <person name="Billault A."/>
            <person name="Brottier P."/>
            <person name="Camus J.-C."/>
            <person name="Cattolico L."/>
            <person name="Chandler M."/>
            <person name="Choisne N."/>
            <person name="Claudel-Renard C."/>
            <person name="Cunnac S."/>
            <person name="Demange N."/>
            <person name="Gaspin C."/>
            <person name="Lavie M."/>
            <person name="Moisan A."/>
            <person name="Robert C."/>
            <person name="Saurin W."/>
            <person name="Schiex T."/>
            <person name="Siguier P."/>
            <person name="Thebault P."/>
            <person name="Whalen M."/>
            <person name="Wincker P."/>
            <person name="Levy M."/>
            <person name="Weissenbach J."/>
            <person name="Boucher C.A."/>
        </authorList>
    </citation>
    <scope>NUCLEOTIDE SEQUENCE [LARGE SCALE GENOMIC DNA]</scope>
    <source>
        <strain>ATCC BAA-1114 / GMI1000</strain>
    </source>
</reference>
<evidence type="ECO:0000255" key="1">
    <source>
        <dbReference type="HAMAP-Rule" id="MF_00259"/>
    </source>
</evidence>
<sequence>MTLQHTPLNAIHRSLGARMVDFGGWDMPVNYGSQIEEHHAVRRDAGIFDVSHMCVVDLTGARVRDFLRGLLANNIDKLQTPGKALYTCMLNPKGGVIDDLIVYFFREDWFRLVVNAGTAPTDIEWITAQNAAAGTGVAITPRRSDNNAGAEPLGIVAVQGPNARAKAYAALPGTQAVGEALKPFNAGFATIDGVGEIMVARTGYTGEDGFELVVPAAQIAGVWERLLQAGVRPCGLGARDTLRLEAGMNLYGQDMDEHVSPLDAGLAWTVDLQSERDFNGKAALAANGQRDQFVGLLLRDKGGVLRAHQKVITAAGDGEITSGTFSPSLSQSIALARLPKDVAIGADVQVEIRDRRLTATVVKLPFVRNGKALVS</sequence>
<comment type="function">
    <text evidence="1">The glycine cleavage system catalyzes the degradation of glycine.</text>
</comment>
<comment type="catalytic activity">
    <reaction evidence="1">
        <text>N(6)-[(R)-S(8)-aminomethyldihydrolipoyl]-L-lysyl-[protein] + (6S)-5,6,7,8-tetrahydrofolate = N(6)-[(R)-dihydrolipoyl]-L-lysyl-[protein] + (6R)-5,10-methylene-5,6,7,8-tetrahydrofolate + NH4(+)</text>
        <dbReference type="Rhea" id="RHEA:16945"/>
        <dbReference type="Rhea" id="RHEA-COMP:10475"/>
        <dbReference type="Rhea" id="RHEA-COMP:10492"/>
        <dbReference type="ChEBI" id="CHEBI:15636"/>
        <dbReference type="ChEBI" id="CHEBI:28938"/>
        <dbReference type="ChEBI" id="CHEBI:57453"/>
        <dbReference type="ChEBI" id="CHEBI:83100"/>
        <dbReference type="ChEBI" id="CHEBI:83143"/>
        <dbReference type="EC" id="2.1.2.10"/>
    </reaction>
</comment>
<comment type="subunit">
    <text evidence="1">The glycine cleavage system is composed of four proteins: P, T, L and H.</text>
</comment>
<comment type="similarity">
    <text evidence="1">Belongs to the GcvT family.</text>
</comment>
<organism>
    <name type="scientific">Ralstonia nicotianae (strain ATCC BAA-1114 / GMI1000)</name>
    <name type="common">Ralstonia solanacearum</name>
    <dbReference type="NCBI Taxonomy" id="267608"/>
    <lineage>
        <taxon>Bacteria</taxon>
        <taxon>Pseudomonadati</taxon>
        <taxon>Pseudomonadota</taxon>
        <taxon>Betaproteobacteria</taxon>
        <taxon>Burkholderiales</taxon>
        <taxon>Burkholderiaceae</taxon>
        <taxon>Ralstonia</taxon>
        <taxon>Ralstonia solanacearum species complex</taxon>
    </lineage>
</organism>
<gene>
    <name evidence="1" type="primary">gcvT</name>
    <name type="ordered locus">RSc3293</name>
    <name type="ORF">RS02522</name>
</gene>
<protein>
    <recommendedName>
        <fullName evidence="1">Aminomethyltransferase</fullName>
        <ecNumber evidence="1">2.1.2.10</ecNumber>
    </recommendedName>
    <alternativeName>
        <fullName evidence="1">Glycine cleavage system T protein</fullName>
    </alternativeName>
</protein>
<keyword id="KW-0032">Aminotransferase</keyword>
<keyword id="KW-1185">Reference proteome</keyword>
<keyword id="KW-0808">Transferase</keyword>
<feature type="chain" id="PRO_0000122589" description="Aminomethyltransferase">
    <location>
        <begin position="1"/>
        <end position="375"/>
    </location>
</feature>
<name>GCST_RALN1</name>
<dbReference type="EC" id="2.1.2.10" evidence="1"/>
<dbReference type="EMBL" id="AL646052">
    <property type="protein sequence ID" value="CAD17081.1"/>
    <property type="molecule type" value="Genomic_DNA"/>
</dbReference>
<dbReference type="RefSeq" id="WP_011003177.1">
    <property type="nucleotide sequence ID" value="NC_003295.1"/>
</dbReference>
<dbReference type="SMR" id="Q8XUA0"/>
<dbReference type="STRING" id="267608.RSc3293"/>
<dbReference type="EnsemblBacteria" id="CAD17081">
    <property type="protein sequence ID" value="CAD17081"/>
    <property type="gene ID" value="RSc3293"/>
</dbReference>
<dbReference type="KEGG" id="rso:RSc3293"/>
<dbReference type="PATRIC" id="fig|267608.8.peg.3341"/>
<dbReference type="eggNOG" id="COG0404">
    <property type="taxonomic scope" value="Bacteria"/>
</dbReference>
<dbReference type="HOGENOM" id="CLU_007884_10_2_4"/>
<dbReference type="Proteomes" id="UP000001436">
    <property type="component" value="Chromosome"/>
</dbReference>
<dbReference type="GO" id="GO:0005829">
    <property type="term" value="C:cytosol"/>
    <property type="evidence" value="ECO:0007669"/>
    <property type="project" value="TreeGrafter"/>
</dbReference>
<dbReference type="GO" id="GO:0005960">
    <property type="term" value="C:glycine cleavage complex"/>
    <property type="evidence" value="ECO:0007669"/>
    <property type="project" value="InterPro"/>
</dbReference>
<dbReference type="GO" id="GO:0004047">
    <property type="term" value="F:aminomethyltransferase activity"/>
    <property type="evidence" value="ECO:0007669"/>
    <property type="project" value="UniProtKB-UniRule"/>
</dbReference>
<dbReference type="GO" id="GO:0008483">
    <property type="term" value="F:transaminase activity"/>
    <property type="evidence" value="ECO:0007669"/>
    <property type="project" value="UniProtKB-KW"/>
</dbReference>
<dbReference type="GO" id="GO:0019464">
    <property type="term" value="P:glycine decarboxylation via glycine cleavage system"/>
    <property type="evidence" value="ECO:0007669"/>
    <property type="project" value="UniProtKB-UniRule"/>
</dbReference>
<dbReference type="FunFam" id="3.30.70.1400:FF:000001">
    <property type="entry name" value="Aminomethyltransferase"/>
    <property type="match status" value="1"/>
</dbReference>
<dbReference type="FunFam" id="4.10.1250.10:FF:000001">
    <property type="entry name" value="Aminomethyltransferase"/>
    <property type="match status" value="1"/>
</dbReference>
<dbReference type="Gene3D" id="2.40.30.110">
    <property type="entry name" value="Aminomethyltransferase beta-barrel domains"/>
    <property type="match status" value="1"/>
</dbReference>
<dbReference type="Gene3D" id="3.30.70.1400">
    <property type="entry name" value="Aminomethyltransferase beta-barrel domains"/>
    <property type="match status" value="1"/>
</dbReference>
<dbReference type="Gene3D" id="4.10.1250.10">
    <property type="entry name" value="Aminomethyltransferase fragment"/>
    <property type="match status" value="1"/>
</dbReference>
<dbReference type="Gene3D" id="3.30.1360.120">
    <property type="entry name" value="Probable tRNA modification gtpase trme, domain 1"/>
    <property type="match status" value="1"/>
</dbReference>
<dbReference type="HAMAP" id="MF_00259">
    <property type="entry name" value="GcvT"/>
    <property type="match status" value="1"/>
</dbReference>
<dbReference type="InterPro" id="IPR006223">
    <property type="entry name" value="GCS_T"/>
</dbReference>
<dbReference type="InterPro" id="IPR022903">
    <property type="entry name" value="GCS_T_bac"/>
</dbReference>
<dbReference type="InterPro" id="IPR013977">
    <property type="entry name" value="GCST_C"/>
</dbReference>
<dbReference type="InterPro" id="IPR006222">
    <property type="entry name" value="GCV_T_N"/>
</dbReference>
<dbReference type="InterPro" id="IPR028896">
    <property type="entry name" value="GcvT/YgfZ/DmdA"/>
</dbReference>
<dbReference type="InterPro" id="IPR029043">
    <property type="entry name" value="GcvT/YgfZ_C"/>
</dbReference>
<dbReference type="InterPro" id="IPR027266">
    <property type="entry name" value="TrmE/GcvT_dom1"/>
</dbReference>
<dbReference type="NCBIfam" id="TIGR00528">
    <property type="entry name" value="gcvT"/>
    <property type="match status" value="1"/>
</dbReference>
<dbReference type="NCBIfam" id="NF001567">
    <property type="entry name" value="PRK00389.1"/>
    <property type="match status" value="1"/>
</dbReference>
<dbReference type="PANTHER" id="PTHR43757">
    <property type="entry name" value="AMINOMETHYLTRANSFERASE"/>
    <property type="match status" value="1"/>
</dbReference>
<dbReference type="PANTHER" id="PTHR43757:SF2">
    <property type="entry name" value="AMINOMETHYLTRANSFERASE, MITOCHONDRIAL"/>
    <property type="match status" value="1"/>
</dbReference>
<dbReference type="Pfam" id="PF01571">
    <property type="entry name" value="GCV_T"/>
    <property type="match status" value="1"/>
</dbReference>
<dbReference type="Pfam" id="PF08669">
    <property type="entry name" value="GCV_T_C"/>
    <property type="match status" value="1"/>
</dbReference>
<dbReference type="PIRSF" id="PIRSF006487">
    <property type="entry name" value="GcvT"/>
    <property type="match status" value="1"/>
</dbReference>
<dbReference type="SUPFAM" id="SSF101790">
    <property type="entry name" value="Aminomethyltransferase beta-barrel domain"/>
    <property type="match status" value="1"/>
</dbReference>
<dbReference type="SUPFAM" id="SSF103025">
    <property type="entry name" value="Folate-binding domain"/>
    <property type="match status" value="1"/>
</dbReference>
<proteinExistence type="inferred from homology"/>
<accession>Q8XUA0</accession>